<feature type="initiator methionine" description="Removed; by host" evidence="1">
    <location>
        <position position="1"/>
    </location>
</feature>
<feature type="chain" id="PRO_0000144925" description="Capsid protein">
    <location>
        <begin position="2"/>
        <end position="159"/>
    </location>
</feature>
<feature type="modified residue" description="N-acetylserine; by host" evidence="1">
    <location>
        <position position="2"/>
    </location>
</feature>
<proteinExistence type="evidence at protein level"/>
<evidence type="ECO:0000269" key="1">
    <source>
    </source>
</evidence>
<evidence type="ECO:0000305" key="2"/>
<sequence length="159" mass="17610">MSYSITTPSQFVFLSSAWADPIELINLCTNALGNQFQTQQARTVVQRQFSEVWKPSPQVTVRFPDSDFKVYRYNAVLDPLVTALLGAFDTRNRIIEVENQANPTTAETLDATRRVDDATVAIRSAINNLVVELIRGTGSYNRSSFESSSGLVWTSGPAT</sequence>
<name>CAPSD_TMVO</name>
<keyword id="KW-0007">Acetylation</keyword>
<keyword id="KW-0167">Capsid protein</keyword>
<keyword id="KW-0903">Direct protein sequencing</keyword>
<keyword id="KW-1139">Helical capsid protein</keyword>
<keyword id="KW-0946">Virion</keyword>
<organismHost>
    <name type="scientific">Nicotiana tabacum</name>
    <name type="common">Common tobacco</name>
    <dbReference type="NCBI Taxonomy" id="4097"/>
</organismHost>
<gene>
    <name type="primary">CP</name>
</gene>
<accession>P69507</accession>
<accession>P03572</accession>
<dbReference type="PIR" id="C91925">
    <property type="entry name" value="VCTMKO"/>
</dbReference>
<dbReference type="SMR" id="P69507"/>
<dbReference type="iPTMnet" id="P69507"/>
<dbReference type="GO" id="GO:0019029">
    <property type="term" value="C:helical viral capsid"/>
    <property type="evidence" value="ECO:0007669"/>
    <property type="project" value="UniProtKB-KW"/>
</dbReference>
<dbReference type="GO" id="GO:0005198">
    <property type="term" value="F:structural molecule activity"/>
    <property type="evidence" value="ECO:0007669"/>
    <property type="project" value="InterPro"/>
</dbReference>
<dbReference type="Gene3D" id="1.20.120.70">
    <property type="entry name" value="Tobacco mosaic virus-like, coat protein"/>
    <property type="match status" value="1"/>
</dbReference>
<dbReference type="InterPro" id="IPR001337">
    <property type="entry name" value="TMV-like_coat"/>
</dbReference>
<dbReference type="InterPro" id="IPR036417">
    <property type="entry name" value="TMV-like_coat_sf"/>
</dbReference>
<dbReference type="Pfam" id="PF00721">
    <property type="entry name" value="TMV_coat"/>
    <property type="match status" value="1"/>
</dbReference>
<dbReference type="SUPFAM" id="SSF47195">
    <property type="entry name" value="TMV-like viral coat proteins"/>
    <property type="match status" value="1"/>
</dbReference>
<organism>
    <name type="scientific">Tobacco mosaic virus (strain O)</name>
    <name type="common">TMV</name>
    <dbReference type="NCBI Taxonomy" id="12250"/>
    <lineage>
        <taxon>Viruses</taxon>
        <taxon>Riboviria</taxon>
        <taxon>Orthornavirae</taxon>
        <taxon>Kitrinoviricota</taxon>
        <taxon>Alsuviricetes</taxon>
        <taxon>Martellivirales</taxon>
        <taxon>Virgaviridae</taxon>
        <taxon>Tobamovirus</taxon>
        <taxon>Odontoglossum ringspot virus</taxon>
    </lineage>
</organism>
<reference key="1">
    <citation type="journal article" date="1970" name="J. Biochem.">
        <title>Amino acid sequences of some common Japanese strains of tobacco mosaic virus.</title>
        <authorList>
            <person name="Nozu Y."/>
            <person name="Ohno T."/>
            <person name="Okada Y."/>
        </authorList>
    </citation>
    <scope>PROTEIN SEQUENCE OF 2-159</scope>
    <scope>ACETYLATION AT SER-2</scope>
</reference>
<comment type="function">
    <text>Capsid protein self-assembles to form rod-shaped virions about 18 nm in diameter with a central canal enclosing the viral genomic RNA.</text>
</comment>
<comment type="subcellular location">
    <subcellularLocation>
        <location evidence="2">Virion</location>
    </subcellularLocation>
</comment>
<comment type="similarity">
    <text evidence="2">Belongs to the virgaviridae capsid protein family.</text>
</comment>
<protein>
    <recommendedName>
        <fullName>Capsid protein</fullName>
    </recommendedName>
    <alternativeName>
        <fullName>Coat protein</fullName>
    </alternativeName>
</protein>